<proteinExistence type="inferred from homology"/>
<reference key="1">
    <citation type="journal article" date="1998" name="Science">
        <title>Genome sequence of the nematode C. elegans: a platform for investigating biology.</title>
        <authorList>
            <consortium name="The C. elegans sequencing consortium"/>
        </authorList>
    </citation>
    <scope>NUCLEOTIDE SEQUENCE [LARGE SCALE GENOMIC DNA]</scope>
    <scope>ALTERNATIVE SPLICING</scope>
    <source>
        <strain>Bristol N2</strain>
    </source>
</reference>
<reference key="2">
    <citation type="journal article" date="2011" name="Nat. Cell Biol.">
        <title>Apicobasal domain identities of expanding tubular membranes depend on glycosphingolipid biosynthesis.</title>
        <authorList>
            <person name="Zhang H."/>
            <person name="Abraham N."/>
            <person name="Khan L.A."/>
            <person name="Hall D.H."/>
            <person name="Fleming J.T."/>
            <person name="Gobel V."/>
        </authorList>
    </citation>
    <scope>FUNCTION</scope>
</reference>
<gene>
    <name type="primary">sptl-2</name>
    <name type="ORF">F43H9.2</name>
</gene>
<name>SPTC2_CAEEL</name>
<protein>
    <recommendedName>
        <fullName>Serine palmitoyltransferase 2</fullName>
        <ecNumber>2.3.1.50</ecNumber>
    </recommendedName>
    <alternativeName>
        <fullName>Long chain base biosynthesis protein 2</fullName>
        <shortName>LCB 2</shortName>
    </alternativeName>
    <alternativeName>
        <fullName>Serine-palmitoyl-CoA transferase 2</fullName>
        <shortName>SPT 2</shortName>
        <shortName>SPT2</shortName>
    </alternativeName>
</protein>
<keyword id="KW-0012">Acyltransferase</keyword>
<keyword id="KW-0025">Alternative splicing</keyword>
<keyword id="KW-0443">Lipid metabolism</keyword>
<keyword id="KW-0663">Pyridoxal phosphate</keyword>
<keyword id="KW-1185">Reference proteome</keyword>
<keyword id="KW-0746">Sphingolipid metabolism</keyword>
<keyword id="KW-0808">Transferase</keyword>
<comment type="function">
    <text evidence="1 3">Component of the serine palmitoyltransferase (SPT) that catalyzes the first committed step in sphingolipid biosynthesis, which is the condensation of an acyl-CoA species and L-serine. The catalytic core is composed of a heterodimer of sptl-1 and sptl-2 or sptl-1 and sptl-3 (By similarity). Required for the specification of abicobasal polarity and development of the gut lumen.</text>
</comment>
<comment type="catalytic activity">
    <reaction>
        <text>L-serine + hexadecanoyl-CoA + H(+) = 3-oxosphinganine + CO2 + CoA</text>
        <dbReference type="Rhea" id="RHEA:14761"/>
        <dbReference type="ChEBI" id="CHEBI:15378"/>
        <dbReference type="ChEBI" id="CHEBI:16526"/>
        <dbReference type="ChEBI" id="CHEBI:33384"/>
        <dbReference type="ChEBI" id="CHEBI:57287"/>
        <dbReference type="ChEBI" id="CHEBI:57379"/>
        <dbReference type="ChEBI" id="CHEBI:58299"/>
        <dbReference type="EC" id="2.3.1.50"/>
    </reaction>
</comment>
<comment type="cofactor">
    <cofactor evidence="1">
        <name>pyridoxal 5'-phosphate</name>
        <dbReference type="ChEBI" id="CHEBI:597326"/>
    </cofactor>
</comment>
<comment type="pathway">
    <text>Lipid metabolism; sphingolipid metabolism.</text>
</comment>
<comment type="subunit">
    <text evidence="1">Heterodimer of sptl-1/sptl-2.</text>
</comment>
<comment type="alternative products">
    <event type="alternative splicing"/>
    <isoform>
        <id>Q20375-1</id>
        <name>a</name>
        <sequence type="displayed"/>
    </isoform>
    <isoform>
        <id>Q20375-2</id>
        <name>b</name>
        <sequence type="described" ref="VSP_045379"/>
    </isoform>
</comment>
<comment type="similarity">
    <text evidence="4">Belongs to the class-II pyridoxal-phosphate-dependent aminotransferase family.</text>
</comment>
<evidence type="ECO:0000250" key="1"/>
<evidence type="ECO:0000256" key="2">
    <source>
        <dbReference type="SAM" id="MobiDB-lite"/>
    </source>
</evidence>
<evidence type="ECO:0000269" key="3">
    <source>
    </source>
</evidence>
<evidence type="ECO:0000305" key="4"/>
<sequence>MSRRTDSLCLDEYLSSELKKRTHILECAWNQEHDDDEEEEEVKVDQGSEETTSSHDIYGDVGKRAPNEFEKIDRLTTIKVYIAWLALFVFAHIREYVTRFGFVKDLSSKENAKMKDFVPLFSDFEAFYQRNCYIKVRDVFERPICSVPGATVDLVDRVSHDGNWTYEYPGTRTNVINVGSYNYLGFAQSAGPCAEQSASSIDREGLSCCTTVHERGRSVSQAKLEKLVAEFLGVEDAICFSMGFATNSMNAPCLVDKHSLIISDKYNHASLILGCRLSGASTKVFEHNDMESLERILRDAIAYGNPKTHRPYKKILIIVEGIYSMEGSICNLPGIIALKKKYQAYLYLDEAHSIGAMGKTGKGVVEYWGCDPKDVDILMGTFTKSFGAAGGYIAGSKRTVDHLRAASPTGYYSSPMSPPIAQQIYTSMSIIMGKDGTKDGAQRIERLARNSHYFRMKLKQNGFIVYGSNDSPVVPMLIYFPTMCGFYGREMLARNIGCVVVSFPATHMTEGRVRFCISAAHTKEQLDEVLETVNLLGSMSRSKFSKRSHLYKNQKIEW</sequence>
<dbReference type="EC" id="2.3.1.50"/>
<dbReference type="EMBL" id="FO081377">
    <property type="protein sequence ID" value="CCD71173.1"/>
    <property type="molecule type" value="Genomic_DNA"/>
</dbReference>
<dbReference type="EMBL" id="FO081377">
    <property type="protein sequence ID" value="CCD71174.1"/>
    <property type="molecule type" value="Genomic_DNA"/>
</dbReference>
<dbReference type="PIR" id="T29503">
    <property type="entry name" value="T29503"/>
</dbReference>
<dbReference type="RefSeq" id="NP_505064.1">
    <molecule id="Q20375-2"/>
    <property type="nucleotide sequence ID" value="NM_072663.7"/>
</dbReference>
<dbReference type="RefSeq" id="NP_505065.1">
    <molecule id="Q20375-1"/>
    <property type="nucleotide sequence ID" value="NM_072664.6"/>
</dbReference>
<dbReference type="SMR" id="Q20375"/>
<dbReference type="BioGRID" id="57296">
    <property type="interactions" value="1"/>
</dbReference>
<dbReference type="DIP" id="DIP-26394N"/>
<dbReference type="FunCoup" id="Q20375">
    <property type="interactions" value="1640"/>
</dbReference>
<dbReference type="STRING" id="6239.F43H9.2b.1"/>
<dbReference type="PaxDb" id="6239-F43H9.2b"/>
<dbReference type="PeptideAtlas" id="Q20375"/>
<dbReference type="EnsemblMetazoa" id="F43H9.2a.1">
    <molecule id="Q20375-1"/>
    <property type="protein sequence ID" value="F43H9.2a.1"/>
    <property type="gene ID" value="WBGene00018398"/>
</dbReference>
<dbReference type="EnsemblMetazoa" id="F43H9.2b.1">
    <molecule id="Q20375-2"/>
    <property type="protein sequence ID" value="F43H9.2b.1"/>
    <property type="gene ID" value="WBGene00018398"/>
</dbReference>
<dbReference type="EnsemblMetazoa" id="F43H9.2b.2">
    <molecule id="Q20375-2"/>
    <property type="protein sequence ID" value="F43H9.2b.2"/>
    <property type="gene ID" value="WBGene00018398"/>
</dbReference>
<dbReference type="GeneID" id="266646"/>
<dbReference type="KEGG" id="cel:CELE_F43H9.2"/>
<dbReference type="UCSC" id="F43H9.2b">
    <property type="organism name" value="c. elegans"/>
</dbReference>
<dbReference type="AGR" id="WB:WBGene00018398"/>
<dbReference type="CTD" id="266646"/>
<dbReference type="WormBase" id="F43H9.2a">
    <molecule id="Q20375-1"/>
    <property type="protein sequence ID" value="CE07246"/>
    <property type="gene ID" value="WBGene00018398"/>
    <property type="gene designation" value="sptl-2"/>
</dbReference>
<dbReference type="WormBase" id="F43H9.2b">
    <molecule id="Q20375-2"/>
    <property type="protein sequence ID" value="CE27380"/>
    <property type="gene ID" value="WBGene00018398"/>
    <property type="gene designation" value="sptl-2"/>
</dbReference>
<dbReference type="eggNOG" id="KOG1357">
    <property type="taxonomic scope" value="Eukaryota"/>
</dbReference>
<dbReference type="GeneTree" id="ENSGT00940000168104"/>
<dbReference type="HOGENOM" id="CLU_015846_7_1_1"/>
<dbReference type="InParanoid" id="Q20375"/>
<dbReference type="OMA" id="PDEDEIH"/>
<dbReference type="OrthoDB" id="65434at2759"/>
<dbReference type="UniPathway" id="UPA00222"/>
<dbReference type="PRO" id="PR:Q20375"/>
<dbReference type="Proteomes" id="UP000001940">
    <property type="component" value="Chromosome V"/>
</dbReference>
<dbReference type="Bgee" id="WBGene00018398">
    <property type="expression patterns" value="Expressed in pharyngeal muscle cell (C elegans) and 3 other cell types or tissues"/>
</dbReference>
<dbReference type="GO" id="GO:0016020">
    <property type="term" value="C:membrane"/>
    <property type="evidence" value="ECO:0007669"/>
    <property type="project" value="GOC"/>
</dbReference>
<dbReference type="GO" id="GO:0017059">
    <property type="term" value="C:serine palmitoyltransferase complex"/>
    <property type="evidence" value="ECO:0000318"/>
    <property type="project" value="GO_Central"/>
</dbReference>
<dbReference type="GO" id="GO:0030170">
    <property type="term" value="F:pyridoxal phosphate binding"/>
    <property type="evidence" value="ECO:0007669"/>
    <property type="project" value="InterPro"/>
</dbReference>
<dbReference type="GO" id="GO:0004758">
    <property type="term" value="F:serine C-palmitoyltransferase activity"/>
    <property type="evidence" value="ECO:0000318"/>
    <property type="project" value="GO_Central"/>
</dbReference>
<dbReference type="GO" id="GO:0046513">
    <property type="term" value="P:ceramide biosynthetic process"/>
    <property type="evidence" value="ECO:0000318"/>
    <property type="project" value="GO_Central"/>
</dbReference>
<dbReference type="GO" id="GO:0046512">
    <property type="term" value="P:sphingosine biosynthetic process"/>
    <property type="evidence" value="ECO:0000318"/>
    <property type="project" value="GO_Central"/>
</dbReference>
<dbReference type="CDD" id="cd06454">
    <property type="entry name" value="KBL_like"/>
    <property type="match status" value="1"/>
</dbReference>
<dbReference type="Gene3D" id="3.90.1150.10">
    <property type="entry name" value="Aspartate Aminotransferase, domain 1"/>
    <property type="match status" value="1"/>
</dbReference>
<dbReference type="Gene3D" id="3.40.640.10">
    <property type="entry name" value="Type I PLP-dependent aspartate aminotransferase-like (Major domain)"/>
    <property type="match status" value="1"/>
</dbReference>
<dbReference type="InterPro" id="IPR001917">
    <property type="entry name" value="Aminotrans_II_pyridoxalP_BS"/>
</dbReference>
<dbReference type="InterPro" id="IPR004839">
    <property type="entry name" value="Aminotransferase_I/II_large"/>
</dbReference>
<dbReference type="InterPro" id="IPR050087">
    <property type="entry name" value="AON_synthase_class-II"/>
</dbReference>
<dbReference type="InterPro" id="IPR015424">
    <property type="entry name" value="PyrdxlP-dep_Trfase"/>
</dbReference>
<dbReference type="InterPro" id="IPR015421">
    <property type="entry name" value="PyrdxlP-dep_Trfase_major"/>
</dbReference>
<dbReference type="InterPro" id="IPR015422">
    <property type="entry name" value="PyrdxlP-dep_Trfase_small"/>
</dbReference>
<dbReference type="PANTHER" id="PTHR13693">
    <property type="entry name" value="CLASS II AMINOTRANSFERASE/8-AMINO-7-OXONONANOATE SYNTHASE"/>
    <property type="match status" value="1"/>
</dbReference>
<dbReference type="PANTHER" id="PTHR13693:SF3">
    <property type="entry name" value="LD36009P"/>
    <property type="match status" value="1"/>
</dbReference>
<dbReference type="Pfam" id="PF00155">
    <property type="entry name" value="Aminotran_1_2"/>
    <property type="match status" value="1"/>
</dbReference>
<dbReference type="SUPFAM" id="SSF53383">
    <property type="entry name" value="PLP-dependent transferases"/>
    <property type="match status" value="1"/>
</dbReference>
<dbReference type="PROSITE" id="PS00599">
    <property type="entry name" value="AA_TRANSFER_CLASS_2"/>
    <property type="match status" value="1"/>
</dbReference>
<accession>Q20375</accession>
<accession>Q95ZT7</accession>
<feature type="chain" id="PRO_0000421272" description="Serine palmitoyltransferase 2">
    <location>
        <begin position="1"/>
        <end position="558"/>
    </location>
</feature>
<feature type="region of interest" description="Disordered" evidence="2">
    <location>
        <begin position="33"/>
        <end position="57"/>
    </location>
</feature>
<feature type="compositionally biased region" description="Acidic residues" evidence="2">
    <location>
        <begin position="33"/>
        <end position="42"/>
    </location>
</feature>
<feature type="modified residue" description="N6-(pyridoxal phosphate)lysine" evidence="1">
    <location>
        <position position="384"/>
    </location>
</feature>
<feature type="splice variant" id="VSP_045379" description="In isoform b." evidence="4">
    <original>MSRRTDSLCLDEYLSS</original>
    <variation>MTSEVAKRNSPFRFLHKLPIRLTFTEKKSPLLISDLAKQREEND</variation>
    <location>
        <begin position="1"/>
        <end position="16"/>
    </location>
</feature>
<organism>
    <name type="scientific">Caenorhabditis elegans</name>
    <dbReference type="NCBI Taxonomy" id="6239"/>
    <lineage>
        <taxon>Eukaryota</taxon>
        <taxon>Metazoa</taxon>
        <taxon>Ecdysozoa</taxon>
        <taxon>Nematoda</taxon>
        <taxon>Chromadorea</taxon>
        <taxon>Rhabditida</taxon>
        <taxon>Rhabditina</taxon>
        <taxon>Rhabditomorpha</taxon>
        <taxon>Rhabditoidea</taxon>
        <taxon>Rhabditidae</taxon>
        <taxon>Peloderinae</taxon>
        <taxon>Caenorhabditis</taxon>
    </lineage>
</organism>